<name>MIAB_DICNV</name>
<evidence type="ECO:0000255" key="1">
    <source>
        <dbReference type="HAMAP-Rule" id="MF_01864"/>
    </source>
</evidence>
<evidence type="ECO:0000255" key="2">
    <source>
        <dbReference type="PROSITE-ProRule" id="PRU01266"/>
    </source>
</evidence>
<reference key="1">
    <citation type="journal article" date="2007" name="Nat. Biotechnol.">
        <title>Genome sequence and identification of candidate vaccine antigens from the animal pathogen Dichelobacter nodosus.</title>
        <authorList>
            <person name="Myers G.S.A."/>
            <person name="Parker D."/>
            <person name="Al-Hasani K."/>
            <person name="Kennan R.M."/>
            <person name="Seemann T."/>
            <person name="Ren Q."/>
            <person name="Badger J.H."/>
            <person name="Selengut J.D."/>
            <person name="Deboy R.T."/>
            <person name="Tettelin H."/>
            <person name="Boyce J.D."/>
            <person name="McCarl V.P."/>
            <person name="Han X."/>
            <person name="Nelson W.C."/>
            <person name="Madupu R."/>
            <person name="Mohamoud Y."/>
            <person name="Holley T."/>
            <person name="Fedorova N."/>
            <person name="Khouri H."/>
            <person name="Bottomley S.P."/>
            <person name="Whittington R.J."/>
            <person name="Adler B."/>
            <person name="Songer J.G."/>
            <person name="Rood J.I."/>
            <person name="Paulsen I.T."/>
        </authorList>
    </citation>
    <scope>NUCLEOTIDE SEQUENCE [LARGE SCALE GENOMIC DNA]</scope>
    <source>
        <strain>VCS1703A</strain>
    </source>
</reference>
<comment type="function">
    <text evidence="1">Catalyzes the methylthiolation of N6-(dimethylallyl)adenosine (i(6)A), leading to the formation of 2-methylthio-N6-(dimethylallyl)adenosine (ms(2)i(6)A) at position 37 in tRNAs that read codons beginning with uridine.</text>
</comment>
<comment type="catalytic activity">
    <reaction evidence="1">
        <text>N(6)-dimethylallyladenosine(37) in tRNA + (sulfur carrier)-SH + AH2 + 2 S-adenosyl-L-methionine = 2-methylsulfanyl-N(6)-dimethylallyladenosine(37) in tRNA + (sulfur carrier)-H + 5'-deoxyadenosine + L-methionine + A + S-adenosyl-L-homocysteine + 2 H(+)</text>
        <dbReference type="Rhea" id="RHEA:37067"/>
        <dbReference type="Rhea" id="RHEA-COMP:10375"/>
        <dbReference type="Rhea" id="RHEA-COMP:10376"/>
        <dbReference type="Rhea" id="RHEA-COMP:14737"/>
        <dbReference type="Rhea" id="RHEA-COMP:14739"/>
        <dbReference type="ChEBI" id="CHEBI:13193"/>
        <dbReference type="ChEBI" id="CHEBI:15378"/>
        <dbReference type="ChEBI" id="CHEBI:17319"/>
        <dbReference type="ChEBI" id="CHEBI:17499"/>
        <dbReference type="ChEBI" id="CHEBI:29917"/>
        <dbReference type="ChEBI" id="CHEBI:57844"/>
        <dbReference type="ChEBI" id="CHEBI:57856"/>
        <dbReference type="ChEBI" id="CHEBI:59789"/>
        <dbReference type="ChEBI" id="CHEBI:64428"/>
        <dbReference type="ChEBI" id="CHEBI:74415"/>
        <dbReference type="ChEBI" id="CHEBI:74417"/>
        <dbReference type="EC" id="2.8.4.3"/>
    </reaction>
</comment>
<comment type="cofactor">
    <cofactor evidence="1">
        <name>[4Fe-4S] cluster</name>
        <dbReference type="ChEBI" id="CHEBI:49883"/>
    </cofactor>
    <text evidence="1">Binds 2 [4Fe-4S] clusters. One cluster is coordinated with 3 cysteines and an exchangeable S-adenosyl-L-methionine.</text>
</comment>
<comment type="subunit">
    <text evidence="1">Monomer.</text>
</comment>
<comment type="subcellular location">
    <subcellularLocation>
        <location evidence="1">Cytoplasm</location>
    </subcellularLocation>
</comment>
<comment type="similarity">
    <text evidence="1">Belongs to the methylthiotransferase family. MiaB subfamily.</text>
</comment>
<feature type="chain" id="PRO_0000374269" description="tRNA-2-methylthio-N(6)-dimethylallyladenosine synthase">
    <location>
        <begin position="1"/>
        <end position="456"/>
    </location>
</feature>
<feature type="domain" description="MTTase N-terminal" evidence="1">
    <location>
        <begin position="6"/>
        <end position="123"/>
    </location>
</feature>
<feature type="domain" description="Radical SAM core" evidence="2">
    <location>
        <begin position="146"/>
        <end position="380"/>
    </location>
</feature>
<feature type="domain" description="TRAM" evidence="1">
    <location>
        <begin position="381"/>
        <end position="444"/>
    </location>
</feature>
<feature type="binding site" evidence="1">
    <location>
        <position position="15"/>
    </location>
    <ligand>
        <name>[4Fe-4S] cluster</name>
        <dbReference type="ChEBI" id="CHEBI:49883"/>
        <label>1</label>
    </ligand>
</feature>
<feature type="binding site" evidence="1">
    <location>
        <position position="52"/>
    </location>
    <ligand>
        <name>[4Fe-4S] cluster</name>
        <dbReference type="ChEBI" id="CHEBI:49883"/>
        <label>1</label>
    </ligand>
</feature>
<feature type="binding site" evidence="1">
    <location>
        <position position="86"/>
    </location>
    <ligand>
        <name>[4Fe-4S] cluster</name>
        <dbReference type="ChEBI" id="CHEBI:49883"/>
        <label>1</label>
    </ligand>
</feature>
<feature type="binding site" evidence="1">
    <location>
        <position position="160"/>
    </location>
    <ligand>
        <name>[4Fe-4S] cluster</name>
        <dbReference type="ChEBI" id="CHEBI:49883"/>
        <label>2</label>
        <note>4Fe-4S-S-AdoMet</note>
    </ligand>
</feature>
<feature type="binding site" evidence="1">
    <location>
        <position position="164"/>
    </location>
    <ligand>
        <name>[4Fe-4S] cluster</name>
        <dbReference type="ChEBI" id="CHEBI:49883"/>
        <label>2</label>
        <note>4Fe-4S-S-AdoMet</note>
    </ligand>
</feature>
<feature type="binding site" evidence="1">
    <location>
        <position position="167"/>
    </location>
    <ligand>
        <name>[4Fe-4S] cluster</name>
        <dbReference type="ChEBI" id="CHEBI:49883"/>
        <label>2</label>
        <note>4Fe-4S-S-AdoMet</note>
    </ligand>
</feature>
<proteinExistence type="inferred from homology"/>
<keyword id="KW-0004">4Fe-4S</keyword>
<keyword id="KW-0963">Cytoplasm</keyword>
<keyword id="KW-0408">Iron</keyword>
<keyword id="KW-0411">Iron-sulfur</keyword>
<keyword id="KW-0479">Metal-binding</keyword>
<keyword id="KW-1185">Reference proteome</keyword>
<keyword id="KW-0949">S-adenosyl-L-methionine</keyword>
<keyword id="KW-0808">Transferase</keyword>
<keyword id="KW-0819">tRNA processing</keyword>
<sequence length="456" mass="51013">MQTVLKHVYIETYGCQMNEYDSSKMLAVLKNSHGITPVATPEEADVLLLNTCSVREKAQEKVFSQLGRWKSLKERKPHLIIGVGGCVASQEGEMIRRRAPEVDVVFGPQTLHRLPNLIEEAQRSRGGVVDVSFPEIEKFDHLPEPRAEGPTAYVSVMEGCSKYCTYCVVPYTRGAEISRPFDDVLAECATLAAQGVREINLLGQNVNAYRGAMHDGTIADLALLIEYVAAIPNIGRIRFTTSHPSEFSDALIETYRRVPKLVSHLHLPVQSGSNRILALMKRDYKVAEYQEKLAKIRAIRPDISFSSDFIVGFPGEEEEDFQATMDLIEAVFFDTSYSFIYSQRPGTPASTMPDRVPLTVKKERLARLQARILEMAASISEAMVGTEQWVLVDRLSRKSEREVSGRTENNRVVNFSAPASLIGRFAKVQITAAYKNSLRGRLIEAELLPDPVVYTR</sequence>
<protein>
    <recommendedName>
        <fullName evidence="1">tRNA-2-methylthio-N(6)-dimethylallyladenosine synthase</fullName>
        <ecNumber evidence="1">2.8.4.3</ecNumber>
    </recommendedName>
    <alternativeName>
        <fullName evidence="1">(Dimethylallyl)adenosine tRNA methylthiotransferase MiaB</fullName>
    </alternativeName>
    <alternativeName>
        <fullName evidence="1">tRNA-i(6)A37 methylthiotransferase</fullName>
    </alternativeName>
</protein>
<accession>A5EXA7</accession>
<dbReference type="EC" id="2.8.4.3" evidence="1"/>
<dbReference type="EMBL" id="CP000513">
    <property type="protein sequence ID" value="ABQ14300.1"/>
    <property type="molecule type" value="Genomic_DNA"/>
</dbReference>
<dbReference type="RefSeq" id="WP_012031540.1">
    <property type="nucleotide sequence ID" value="NC_009446.1"/>
</dbReference>
<dbReference type="SMR" id="A5EXA7"/>
<dbReference type="STRING" id="246195.DNO_1245"/>
<dbReference type="KEGG" id="dno:DNO_1245"/>
<dbReference type="eggNOG" id="COG0621">
    <property type="taxonomic scope" value="Bacteria"/>
</dbReference>
<dbReference type="HOGENOM" id="CLU_018697_2_0_6"/>
<dbReference type="OrthoDB" id="9805215at2"/>
<dbReference type="Proteomes" id="UP000000248">
    <property type="component" value="Chromosome"/>
</dbReference>
<dbReference type="GO" id="GO:0005829">
    <property type="term" value="C:cytosol"/>
    <property type="evidence" value="ECO:0007669"/>
    <property type="project" value="TreeGrafter"/>
</dbReference>
<dbReference type="GO" id="GO:0051539">
    <property type="term" value="F:4 iron, 4 sulfur cluster binding"/>
    <property type="evidence" value="ECO:0007669"/>
    <property type="project" value="UniProtKB-UniRule"/>
</dbReference>
<dbReference type="GO" id="GO:0046872">
    <property type="term" value="F:metal ion binding"/>
    <property type="evidence" value="ECO:0007669"/>
    <property type="project" value="UniProtKB-KW"/>
</dbReference>
<dbReference type="GO" id="GO:0035597">
    <property type="term" value="F:N6-isopentenyladenosine methylthiotransferase activity"/>
    <property type="evidence" value="ECO:0007669"/>
    <property type="project" value="TreeGrafter"/>
</dbReference>
<dbReference type="CDD" id="cd01335">
    <property type="entry name" value="Radical_SAM"/>
    <property type="match status" value="1"/>
</dbReference>
<dbReference type="FunFam" id="3.40.50.12160:FF:000001">
    <property type="entry name" value="tRNA-2-methylthio-N(6)-dimethylallyladenosine synthase"/>
    <property type="match status" value="1"/>
</dbReference>
<dbReference type="FunFam" id="3.80.30.20:FF:000001">
    <property type="entry name" value="tRNA-2-methylthio-N(6)-dimethylallyladenosine synthase 2"/>
    <property type="match status" value="1"/>
</dbReference>
<dbReference type="Gene3D" id="3.40.50.12160">
    <property type="entry name" value="Methylthiotransferase, N-terminal domain"/>
    <property type="match status" value="1"/>
</dbReference>
<dbReference type="Gene3D" id="3.80.30.20">
    <property type="entry name" value="tm_1862 like domain"/>
    <property type="match status" value="1"/>
</dbReference>
<dbReference type="HAMAP" id="MF_01864">
    <property type="entry name" value="tRNA_metthiotr_MiaB"/>
    <property type="match status" value="1"/>
</dbReference>
<dbReference type="InterPro" id="IPR006638">
    <property type="entry name" value="Elp3/MiaA/NifB-like_rSAM"/>
</dbReference>
<dbReference type="InterPro" id="IPR005839">
    <property type="entry name" value="Methylthiotransferase"/>
</dbReference>
<dbReference type="InterPro" id="IPR020612">
    <property type="entry name" value="Methylthiotransferase_CS"/>
</dbReference>
<dbReference type="InterPro" id="IPR013848">
    <property type="entry name" value="Methylthiotransferase_N"/>
</dbReference>
<dbReference type="InterPro" id="IPR038135">
    <property type="entry name" value="Methylthiotransferase_N_sf"/>
</dbReference>
<dbReference type="InterPro" id="IPR006463">
    <property type="entry name" value="MiaB_methiolase"/>
</dbReference>
<dbReference type="InterPro" id="IPR007197">
    <property type="entry name" value="rSAM"/>
</dbReference>
<dbReference type="InterPro" id="IPR023404">
    <property type="entry name" value="rSAM_horseshoe"/>
</dbReference>
<dbReference type="InterPro" id="IPR002792">
    <property type="entry name" value="TRAM_dom"/>
</dbReference>
<dbReference type="NCBIfam" id="TIGR01574">
    <property type="entry name" value="miaB-methiolase"/>
    <property type="match status" value="1"/>
</dbReference>
<dbReference type="NCBIfam" id="TIGR00089">
    <property type="entry name" value="MiaB/RimO family radical SAM methylthiotransferase"/>
    <property type="match status" value="1"/>
</dbReference>
<dbReference type="PANTHER" id="PTHR43020">
    <property type="entry name" value="CDK5 REGULATORY SUBUNIT-ASSOCIATED PROTEIN 1"/>
    <property type="match status" value="1"/>
</dbReference>
<dbReference type="PANTHER" id="PTHR43020:SF2">
    <property type="entry name" value="MITOCHONDRIAL TRNA METHYLTHIOTRANSFERASE CDK5RAP1"/>
    <property type="match status" value="1"/>
</dbReference>
<dbReference type="Pfam" id="PF04055">
    <property type="entry name" value="Radical_SAM"/>
    <property type="match status" value="1"/>
</dbReference>
<dbReference type="Pfam" id="PF01938">
    <property type="entry name" value="TRAM"/>
    <property type="match status" value="1"/>
</dbReference>
<dbReference type="Pfam" id="PF00919">
    <property type="entry name" value="UPF0004"/>
    <property type="match status" value="1"/>
</dbReference>
<dbReference type="SFLD" id="SFLDF00273">
    <property type="entry name" value="(dimethylallyl)adenosine_tRNA"/>
    <property type="match status" value="1"/>
</dbReference>
<dbReference type="SFLD" id="SFLDG01082">
    <property type="entry name" value="B12-binding_domain_containing"/>
    <property type="match status" value="1"/>
</dbReference>
<dbReference type="SFLD" id="SFLDS00029">
    <property type="entry name" value="Radical_SAM"/>
    <property type="match status" value="1"/>
</dbReference>
<dbReference type="SMART" id="SM00729">
    <property type="entry name" value="Elp3"/>
    <property type="match status" value="1"/>
</dbReference>
<dbReference type="SUPFAM" id="SSF102114">
    <property type="entry name" value="Radical SAM enzymes"/>
    <property type="match status" value="1"/>
</dbReference>
<dbReference type="PROSITE" id="PS51449">
    <property type="entry name" value="MTTASE_N"/>
    <property type="match status" value="1"/>
</dbReference>
<dbReference type="PROSITE" id="PS01278">
    <property type="entry name" value="MTTASE_RADICAL"/>
    <property type="match status" value="1"/>
</dbReference>
<dbReference type="PROSITE" id="PS51918">
    <property type="entry name" value="RADICAL_SAM"/>
    <property type="match status" value="1"/>
</dbReference>
<dbReference type="PROSITE" id="PS50926">
    <property type="entry name" value="TRAM"/>
    <property type="match status" value="1"/>
</dbReference>
<gene>
    <name evidence="1" type="primary">miaB</name>
    <name type="ordered locus">DNO_1245</name>
</gene>
<organism>
    <name type="scientific">Dichelobacter nodosus (strain VCS1703A)</name>
    <dbReference type="NCBI Taxonomy" id="246195"/>
    <lineage>
        <taxon>Bacteria</taxon>
        <taxon>Pseudomonadati</taxon>
        <taxon>Pseudomonadota</taxon>
        <taxon>Gammaproteobacteria</taxon>
        <taxon>Cardiobacteriales</taxon>
        <taxon>Cardiobacteriaceae</taxon>
        <taxon>Dichelobacter</taxon>
    </lineage>
</organism>